<dbReference type="EMBL" id="CP000931">
    <property type="protein sequence ID" value="ABZ78215.1"/>
    <property type="molecule type" value="Genomic_DNA"/>
</dbReference>
<dbReference type="RefSeq" id="WP_012278733.1">
    <property type="nucleotide sequence ID" value="NC_010334.1"/>
</dbReference>
<dbReference type="SMR" id="B0TUU8"/>
<dbReference type="STRING" id="458817.Shal_3674"/>
<dbReference type="KEGG" id="shl:Shal_3674"/>
<dbReference type="eggNOG" id="COG2965">
    <property type="taxonomic scope" value="Bacteria"/>
</dbReference>
<dbReference type="HOGENOM" id="CLU_166075_0_0_6"/>
<dbReference type="OrthoDB" id="9180733at2"/>
<dbReference type="Proteomes" id="UP000001317">
    <property type="component" value="Chromosome"/>
</dbReference>
<dbReference type="GO" id="GO:1990077">
    <property type="term" value="C:primosome complex"/>
    <property type="evidence" value="ECO:0007669"/>
    <property type="project" value="UniProtKB-KW"/>
</dbReference>
<dbReference type="GO" id="GO:0003697">
    <property type="term" value="F:single-stranded DNA binding"/>
    <property type="evidence" value="ECO:0007669"/>
    <property type="project" value="UniProtKB-UniRule"/>
</dbReference>
<dbReference type="GO" id="GO:0006269">
    <property type="term" value="P:DNA replication, synthesis of primer"/>
    <property type="evidence" value="ECO:0007669"/>
    <property type="project" value="UniProtKB-KW"/>
</dbReference>
<dbReference type="Gene3D" id="2.40.50.140">
    <property type="entry name" value="Nucleic acid-binding proteins"/>
    <property type="match status" value="1"/>
</dbReference>
<dbReference type="HAMAP" id="MF_00720">
    <property type="entry name" value="PriB"/>
    <property type="match status" value="1"/>
</dbReference>
<dbReference type="InterPro" id="IPR012340">
    <property type="entry name" value="NA-bd_OB-fold"/>
</dbReference>
<dbReference type="InterPro" id="IPR000424">
    <property type="entry name" value="Primosome_PriB/ssb"/>
</dbReference>
<dbReference type="InterPro" id="IPR023646">
    <property type="entry name" value="Prisomal_replication_PriB"/>
</dbReference>
<dbReference type="NCBIfam" id="TIGR04418">
    <property type="entry name" value="PriB_gamma"/>
    <property type="match status" value="1"/>
</dbReference>
<dbReference type="Pfam" id="PF22657">
    <property type="entry name" value="SSB_1"/>
    <property type="match status" value="1"/>
</dbReference>
<dbReference type="PIRSF" id="PIRSF003135">
    <property type="entry name" value="Primosomal_n"/>
    <property type="match status" value="1"/>
</dbReference>
<dbReference type="SUPFAM" id="SSF50249">
    <property type="entry name" value="Nucleic acid-binding proteins"/>
    <property type="match status" value="1"/>
</dbReference>
<dbReference type="PROSITE" id="PS50935">
    <property type="entry name" value="SSB"/>
    <property type="match status" value="1"/>
</dbReference>
<gene>
    <name evidence="1" type="primary">priB</name>
    <name type="ordered locus">Shal_3674</name>
</gene>
<protein>
    <recommendedName>
        <fullName evidence="1">Replication restart protein PriB</fullName>
    </recommendedName>
</protein>
<reference key="1">
    <citation type="submission" date="2008-01" db="EMBL/GenBank/DDBJ databases">
        <title>Complete sequence of Shewanella halifaxensis HAW-EB4.</title>
        <authorList>
            <consortium name="US DOE Joint Genome Institute"/>
            <person name="Copeland A."/>
            <person name="Lucas S."/>
            <person name="Lapidus A."/>
            <person name="Glavina del Rio T."/>
            <person name="Dalin E."/>
            <person name="Tice H."/>
            <person name="Bruce D."/>
            <person name="Goodwin L."/>
            <person name="Pitluck S."/>
            <person name="Sims D."/>
            <person name="Brettin T."/>
            <person name="Detter J.C."/>
            <person name="Han C."/>
            <person name="Kuske C.R."/>
            <person name="Schmutz J."/>
            <person name="Larimer F."/>
            <person name="Land M."/>
            <person name="Hauser L."/>
            <person name="Kyrpides N."/>
            <person name="Kim E."/>
            <person name="Zhao J.-S."/>
            <person name="Richardson P."/>
        </authorList>
    </citation>
    <scope>NUCLEOTIDE SEQUENCE [LARGE SCALE GENOMIC DNA]</scope>
    <source>
        <strain>HAW-EB4</strain>
    </source>
</reference>
<keyword id="KW-0235">DNA replication</keyword>
<keyword id="KW-0238">DNA-binding</keyword>
<keyword id="KW-0639">Primosome</keyword>
<accession>B0TUU8</accession>
<comment type="function">
    <text evidence="1">Involved in the restart of stalled replication forks, which reloads the replicative helicase on sites other than the origin of replication; the PriA-PriB pathway is the major replication restart pathway. During primosome assembly it facilitates complex formation between PriA and DnaT on DNA; stabilizes PriA on DNA. Stimulates the DNA unwinding activity of PriA helicase.</text>
</comment>
<comment type="subunit">
    <text evidence="1">Homodimer. Interacts with PriA and DnaT. Component of the replication restart primosome. Primosome assembly occurs via a 'hand-off' mechanism. PriA binds to replication forks, subsequently PriB then DnaT bind; DnaT then displaces ssDNA to generate the helicase loading substrate.</text>
</comment>
<comment type="similarity">
    <text evidence="1">Belongs to the PriB family.</text>
</comment>
<organism>
    <name type="scientific">Shewanella halifaxensis (strain HAW-EB4)</name>
    <dbReference type="NCBI Taxonomy" id="458817"/>
    <lineage>
        <taxon>Bacteria</taxon>
        <taxon>Pseudomonadati</taxon>
        <taxon>Pseudomonadota</taxon>
        <taxon>Gammaproteobacteria</taxon>
        <taxon>Alteromonadales</taxon>
        <taxon>Shewanellaceae</taxon>
        <taxon>Shewanella</taxon>
    </lineage>
</organism>
<proteinExistence type="inferred from homology"/>
<name>PRIB_SHEHH</name>
<feature type="chain" id="PRO_1000083294" description="Replication restart protein PriB">
    <location>
        <begin position="1"/>
        <end position="101"/>
    </location>
</feature>
<feature type="domain" description="SSB" evidence="1">
    <location>
        <begin position="1"/>
        <end position="101"/>
    </location>
</feature>
<evidence type="ECO:0000255" key="1">
    <source>
        <dbReference type="HAMAP-Rule" id="MF_00720"/>
    </source>
</evidence>
<sequence length="101" mass="11279">MTTNNLVLAGTITRSRQFDSPAGIAHTVVMLEHKSQRYEAGMLRNVYCQIQVVLSGEHFNSVSKNLKAGVEIQVEGFINLQQSRNGQNRLVLHAENVELKT</sequence>